<name>DER_GLOC7</name>
<evidence type="ECO:0000255" key="1">
    <source>
        <dbReference type="HAMAP-Rule" id="MF_00195"/>
    </source>
</evidence>
<dbReference type="EMBL" id="CP001291">
    <property type="protein sequence ID" value="ACK69341.1"/>
    <property type="molecule type" value="Genomic_DNA"/>
</dbReference>
<dbReference type="RefSeq" id="WP_012598288.1">
    <property type="nucleotide sequence ID" value="NC_011729.1"/>
</dbReference>
<dbReference type="SMR" id="B7KHD2"/>
<dbReference type="STRING" id="65393.PCC7424_0885"/>
<dbReference type="KEGG" id="cyc:PCC7424_0885"/>
<dbReference type="eggNOG" id="COG1160">
    <property type="taxonomic scope" value="Bacteria"/>
</dbReference>
<dbReference type="HOGENOM" id="CLU_016077_6_2_3"/>
<dbReference type="OrthoDB" id="9805918at2"/>
<dbReference type="Proteomes" id="UP000002384">
    <property type="component" value="Chromosome"/>
</dbReference>
<dbReference type="GO" id="GO:0016887">
    <property type="term" value="F:ATP hydrolysis activity"/>
    <property type="evidence" value="ECO:0007669"/>
    <property type="project" value="InterPro"/>
</dbReference>
<dbReference type="GO" id="GO:0005525">
    <property type="term" value="F:GTP binding"/>
    <property type="evidence" value="ECO:0007669"/>
    <property type="project" value="UniProtKB-UniRule"/>
</dbReference>
<dbReference type="GO" id="GO:0043022">
    <property type="term" value="F:ribosome binding"/>
    <property type="evidence" value="ECO:0007669"/>
    <property type="project" value="TreeGrafter"/>
</dbReference>
<dbReference type="GO" id="GO:0042254">
    <property type="term" value="P:ribosome biogenesis"/>
    <property type="evidence" value="ECO:0007669"/>
    <property type="project" value="UniProtKB-KW"/>
</dbReference>
<dbReference type="CDD" id="cd01894">
    <property type="entry name" value="EngA1"/>
    <property type="match status" value="1"/>
</dbReference>
<dbReference type="CDD" id="cd01895">
    <property type="entry name" value="EngA2"/>
    <property type="match status" value="1"/>
</dbReference>
<dbReference type="FunFam" id="3.30.300.20:FF:000004">
    <property type="entry name" value="GTPase Der"/>
    <property type="match status" value="1"/>
</dbReference>
<dbReference type="FunFam" id="3.40.50.300:FF:000040">
    <property type="entry name" value="GTPase Der"/>
    <property type="match status" value="1"/>
</dbReference>
<dbReference type="FunFam" id="3.40.50.300:FF:001185">
    <property type="entry name" value="GTPase Der"/>
    <property type="match status" value="1"/>
</dbReference>
<dbReference type="Gene3D" id="3.30.300.20">
    <property type="match status" value="1"/>
</dbReference>
<dbReference type="Gene3D" id="3.40.50.300">
    <property type="entry name" value="P-loop containing nucleotide triphosphate hydrolases"/>
    <property type="match status" value="2"/>
</dbReference>
<dbReference type="HAMAP" id="MF_00195">
    <property type="entry name" value="GTPase_Der"/>
    <property type="match status" value="1"/>
</dbReference>
<dbReference type="InterPro" id="IPR003593">
    <property type="entry name" value="AAA+_ATPase"/>
</dbReference>
<dbReference type="InterPro" id="IPR031166">
    <property type="entry name" value="G_ENGA"/>
</dbReference>
<dbReference type="InterPro" id="IPR006073">
    <property type="entry name" value="GTP-bd"/>
</dbReference>
<dbReference type="InterPro" id="IPR016484">
    <property type="entry name" value="GTPase_Der"/>
</dbReference>
<dbReference type="InterPro" id="IPR032859">
    <property type="entry name" value="KH_dom-like"/>
</dbReference>
<dbReference type="InterPro" id="IPR015946">
    <property type="entry name" value="KH_dom-like_a/b"/>
</dbReference>
<dbReference type="InterPro" id="IPR027417">
    <property type="entry name" value="P-loop_NTPase"/>
</dbReference>
<dbReference type="InterPro" id="IPR005225">
    <property type="entry name" value="Small_GTP-bd"/>
</dbReference>
<dbReference type="NCBIfam" id="TIGR03594">
    <property type="entry name" value="GTPase_EngA"/>
    <property type="match status" value="1"/>
</dbReference>
<dbReference type="NCBIfam" id="TIGR00231">
    <property type="entry name" value="small_GTP"/>
    <property type="match status" value="2"/>
</dbReference>
<dbReference type="PANTHER" id="PTHR43834">
    <property type="entry name" value="GTPASE DER"/>
    <property type="match status" value="1"/>
</dbReference>
<dbReference type="PANTHER" id="PTHR43834:SF6">
    <property type="entry name" value="GTPASE DER"/>
    <property type="match status" value="1"/>
</dbReference>
<dbReference type="Pfam" id="PF14714">
    <property type="entry name" value="KH_dom-like"/>
    <property type="match status" value="1"/>
</dbReference>
<dbReference type="Pfam" id="PF01926">
    <property type="entry name" value="MMR_HSR1"/>
    <property type="match status" value="2"/>
</dbReference>
<dbReference type="PIRSF" id="PIRSF006485">
    <property type="entry name" value="GTP-binding_EngA"/>
    <property type="match status" value="1"/>
</dbReference>
<dbReference type="PRINTS" id="PR00326">
    <property type="entry name" value="GTP1OBG"/>
</dbReference>
<dbReference type="SMART" id="SM00382">
    <property type="entry name" value="AAA"/>
    <property type="match status" value="2"/>
</dbReference>
<dbReference type="SUPFAM" id="SSF52540">
    <property type="entry name" value="P-loop containing nucleoside triphosphate hydrolases"/>
    <property type="match status" value="2"/>
</dbReference>
<dbReference type="PROSITE" id="PS51712">
    <property type="entry name" value="G_ENGA"/>
    <property type="match status" value="2"/>
</dbReference>
<feature type="chain" id="PRO_1000118639" description="GTPase Der">
    <location>
        <begin position="1"/>
        <end position="452"/>
    </location>
</feature>
<feature type="domain" description="EngA-type G 1">
    <location>
        <begin position="4"/>
        <end position="169"/>
    </location>
</feature>
<feature type="domain" description="EngA-type G 2">
    <location>
        <begin position="177"/>
        <end position="352"/>
    </location>
</feature>
<feature type="domain" description="KH-like" evidence="1">
    <location>
        <begin position="353"/>
        <end position="438"/>
    </location>
</feature>
<feature type="binding site" evidence="1">
    <location>
        <begin position="10"/>
        <end position="17"/>
    </location>
    <ligand>
        <name>GTP</name>
        <dbReference type="ChEBI" id="CHEBI:37565"/>
        <label>1</label>
    </ligand>
</feature>
<feature type="binding site" evidence="1">
    <location>
        <begin position="57"/>
        <end position="61"/>
    </location>
    <ligand>
        <name>GTP</name>
        <dbReference type="ChEBI" id="CHEBI:37565"/>
        <label>1</label>
    </ligand>
</feature>
<feature type="binding site" evidence="1">
    <location>
        <begin position="120"/>
        <end position="123"/>
    </location>
    <ligand>
        <name>GTP</name>
        <dbReference type="ChEBI" id="CHEBI:37565"/>
        <label>1</label>
    </ligand>
</feature>
<feature type="binding site" evidence="1">
    <location>
        <begin position="183"/>
        <end position="190"/>
    </location>
    <ligand>
        <name>GTP</name>
        <dbReference type="ChEBI" id="CHEBI:37565"/>
        <label>2</label>
    </ligand>
</feature>
<feature type="binding site" evidence="1">
    <location>
        <begin position="230"/>
        <end position="234"/>
    </location>
    <ligand>
        <name>GTP</name>
        <dbReference type="ChEBI" id="CHEBI:37565"/>
        <label>2</label>
    </ligand>
</feature>
<feature type="binding site" evidence="1">
    <location>
        <begin position="295"/>
        <end position="298"/>
    </location>
    <ligand>
        <name>GTP</name>
        <dbReference type="ChEBI" id="CHEBI:37565"/>
        <label>2</label>
    </ligand>
</feature>
<comment type="function">
    <text evidence="1">GTPase that plays an essential role in the late steps of ribosome biogenesis.</text>
</comment>
<comment type="subunit">
    <text evidence="1">Associates with the 50S ribosomal subunit.</text>
</comment>
<comment type="similarity">
    <text evidence="1">Belongs to the TRAFAC class TrmE-Era-EngA-EngB-Septin-like GTPase superfamily. EngA (Der) GTPase family.</text>
</comment>
<gene>
    <name evidence="1" type="primary">der</name>
    <name type="synonym">engA</name>
    <name type="ordered locus">PCC7424_0885</name>
</gene>
<organism>
    <name type="scientific">Gloeothece citriformis (strain PCC 7424)</name>
    <name type="common">Cyanothece sp. (strain PCC 7424)</name>
    <dbReference type="NCBI Taxonomy" id="65393"/>
    <lineage>
        <taxon>Bacteria</taxon>
        <taxon>Bacillati</taxon>
        <taxon>Cyanobacteriota</taxon>
        <taxon>Cyanophyceae</taxon>
        <taxon>Oscillatoriophycideae</taxon>
        <taxon>Chroococcales</taxon>
        <taxon>Aphanothecaceae</taxon>
        <taxon>Gloeothece</taxon>
        <taxon>Gloeothece citriformis</taxon>
    </lineage>
</organism>
<reference key="1">
    <citation type="journal article" date="2011" name="MBio">
        <title>Novel metabolic attributes of the genus Cyanothece, comprising a group of unicellular nitrogen-fixing Cyanobacteria.</title>
        <authorList>
            <person name="Bandyopadhyay A."/>
            <person name="Elvitigala T."/>
            <person name="Welsh E."/>
            <person name="Stockel J."/>
            <person name="Liberton M."/>
            <person name="Min H."/>
            <person name="Sherman L.A."/>
            <person name="Pakrasi H.B."/>
        </authorList>
    </citation>
    <scope>NUCLEOTIDE SEQUENCE [LARGE SCALE GENOMIC DNA]</scope>
    <source>
        <strain>PCC 7424</strain>
    </source>
</reference>
<keyword id="KW-0342">GTP-binding</keyword>
<keyword id="KW-0547">Nucleotide-binding</keyword>
<keyword id="KW-1185">Reference proteome</keyword>
<keyword id="KW-0677">Repeat</keyword>
<keyword id="KW-0690">Ribosome biogenesis</keyword>
<accession>B7KHD2</accession>
<proteinExistence type="inferred from homology"/>
<protein>
    <recommendedName>
        <fullName evidence="1">GTPase Der</fullName>
    </recommendedName>
    <alternativeName>
        <fullName evidence="1">GTP-binding protein EngA</fullName>
    </alternativeName>
</protein>
<sequence length="452" mass="50877">MTLPIVAIIGRPNVGKSTLVNRLAGDQQAIVHDEPGITRDRTYRPAFWQDRDFQVVDTGGLVFDDDTEFLPLIREQAMTALAEAHAAIFVVDGQTGPTPADEEIANWLRSQSVPIILAVNKCESVEQGLIQASEFWQLGLGEPYPISSIHGSGTGELLDKLIIYLPTTESLSETNEIKVAIVGRPNVGKSSLLNALTGENRAIVSPISGTTRDAIDMVVQRNEQQYRLIDTAGIRRKKNVEYGAEFFSINRAFKAIRRADVVLFVIDALDGITDQDLKLAGRISDEGRATVLVINKWDAVDKDSYTIYEYQKMLESRLYFMDWAEMIFVSALTGKRVEKILDLVDNATASHRRRVSTAVINEVLQEATTWHSPPTTRQGKQGKIYYGTQIKSEPPTITLFVNDPKRFNDNYRRYIERQFRQQLGFTGTPIRLIWRGKSTREVERTTNRATRV</sequence>